<organism>
    <name type="scientific">Staphylococcus aureus (strain MRSA252)</name>
    <dbReference type="NCBI Taxonomy" id="282458"/>
    <lineage>
        <taxon>Bacteria</taxon>
        <taxon>Bacillati</taxon>
        <taxon>Bacillota</taxon>
        <taxon>Bacilli</taxon>
        <taxon>Bacillales</taxon>
        <taxon>Staphylococcaceae</taxon>
        <taxon>Staphylococcus</taxon>
    </lineage>
</organism>
<feature type="chain" id="PRO_0000376555" description="Probable cell division protein WhiA">
    <location>
        <begin position="1"/>
        <end position="314"/>
    </location>
</feature>
<feature type="DNA-binding region" description="H-T-H motif" evidence="1">
    <location>
        <begin position="274"/>
        <end position="308"/>
    </location>
</feature>
<accession>Q6GIM4</accession>
<evidence type="ECO:0000255" key="1">
    <source>
        <dbReference type="HAMAP-Rule" id="MF_01420"/>
    </source>
</evidence>
<dbReference type="EMBL" id="BX571856">
    <property type="protein sequence ID" value="CAG39831.1"/>
    <property type="molecule type" value="Genomic_DNA"/>
</dbReference>
<dbReference type="RefSeq" id="WP_000006551.1">
    <property type="nucleotide sequence ID" value="NC_002952.2"/>
</dbReference>
<dbReference type="SMR" id="Q6GIM4"/>
<dbReference type="KEGG" id="sar:SAR0822"/>
<dbReference type="HOGENOM" id="CLU_053282_0_0_9"/>
<dbReference type="Proteomes" id="UP000000596">
    <property type="component" value="Chromosome"/>
</dbReference>
<dbReference type="GO" id="GO:0003677">
    <property type="term" value="F:DNA binding"/>
    <property type="evidence" value="ECO:0007669"/>
    <property type="project" value="UniProtKB-UniRule"/>
</dbReference>
<dbReference type="GO" id="GO:0051301">
    <property type="term" value="P:cell division"/>
    <property type="evidence" value="ECO:0007669"/>
    <property type="project" value="UniProtKB-UniRule"/>
</dbReference>
<dbReference type="GO" id="GO:0043937">
    <property type="term" value="P:regulation of sporulation"/>
    <property type="evidence" value="ECO:0007669"/>
    <property type="project" value="InterPro"/>
</dbReference>
<dbReference type="FunFam" id="3.10.28.10:FF:000002">
    <property type="entry name" value="Probable cell division protein WhiA"/>
    <property type="match status" value="1"/>
</dbReference>
<dbReference type="Gene3D" id="3.10.28.10">
    <property type="entry name" value="Homing endonucleases"/>
    <property type="match status" value="1"/>
</dbReference>
<dbReference type="HAMAP" id="MF_01420">
    <property type="entry name" value="HTH_type_WhiA"/>
    <property type="match status" value="1"/>
</dbReference>
<dbReference type="InterPro" id="IPR027434">
    <property type="entry name" value="Homing_endonucl"/>
</dbReference>
<dbReference type="InterPro" id="IPR018478">
    <property type="entry name" value="Sporu_reg_WhiA_N_dom"/>
</dbReference>
<dbReference type="InterPro" id="IPR003802">
    <property type="entry name" value="Sporulation_regulator_WhiA"/>
</dbReference>
<dbReference type="InterPro" id="IPR023054">
    <property type="entry name" value="Sporulation_regulator_WhiA_C"/>
</dbReference>
<dbReference type="InterPro" id="IPR039518">
    <property type="entry name" value="WhiA_LAGLIDADG_dom"/>
</dbReference>
<dbReference type="NCBIfam" id="TIGR00647">
    <property type="entry name" value="DNA_bind_WhiA"/>
    <property type="match status" value="1"/>
</dbReference>
<dbReference type="PANTHER" id="PTHR37307">
    <property type="entry name" value="CELL DIVISION PROTEIN WHIA-RELATED"/>
    <property type="match status" value="1"/>
</dbReference>
<dbReference type="PANTHER" id="PTHR37307:SF1">
    <property type="entry name" value="CELL DIVISION PROTEIN WHIA-RELATED"/>
    <property type="match status" value="1"/>
</dbReference>
<dbReference type="Pfam" id="PF02650">
    <property type="entry name" value="HTH_WhiA"/>
    <property type="match status" value="1"/>
</dbReference>
<dbReference type="Pfam" id="PF14527">
    <property type="entry name" value="LAGLIDADG_WhiA"/>
    <property type="match status" value="1"/>
</dbReference>
<dbReference type="Pfam" id="PF10298">
    <property type="entry name" value="WhiA_N"/>
    <property type="match status" value="1"/>
</dbReference>
<dbReference type="SUPFAM" id="SSF55608">
    <property type="entry name" value="Homing endonucleases"/>
    <property type="match status" value="1"/>
</dbReference>
<reference key="1">
    <citation type="journal article" date="2004" name="Proc. Natl. Acad. Sci. U.S.A.">
        <title>Complete genomes of two clinical Staphylococcus aureus strains: evidence for the rapid evolution of virulence and drug resistance.</title>
        <authorList>
            <person name="Holden M.T.G."/>
            <person name="Feil E.J."/>
            <person name="Lindsay J.A."/>
            <person name="Peacock S.J."/>
            <person name="Day N.P.J."/>
            <person name="Enright M.C."/>
            <person name="Foster T.J."/>
            <person name="Moore C.E."/>
            <person name="Hurst L."/>
            <person name="Atkin R."/>
            <person name="Barron A."/>
            <person name="Bason N."/>
            <person name="Bentley S.D."/>
            <person name="Chillingworth C."/>
            <person name="Chillingworth T."/>
            <person name="Churcher C."/>
            <person name="Clark L."/>
            <person name="Corton C."/>
            <person name="Cronin A."/>
            <person name="Doggett J."/>
            <person name="Dowd L."/>
            <person name="Feltwell T."/>
            <person name="Hance Z."/>
            <person name="Harris B."/>
            <person name="Hauser H."/>
            <person name="Holroyd S."/>
            <person name="Jagels K."/>
            <person name="James K.D."/>
            <person name="Lennard N."/>
            <person name="Line A."/>
            <person name="Mayes R."/>
            <person name="Moule S."/>
            <person name="Mungall K."/>
            <person name="Ormond D."/>
            <person name="Quail M.A."/>
            <person name="Rabbinowitsch E."/>
            <person name="Rutherford K.M."/>
            <person name="Sanders M."/>
            <person name="Sharp S."/>
            <person name="Simmonds M."/>
            <person name="Stevens K."/>
            <person name="Whitehead S."/>
            <person name="Barrell B.G."/>
            <person name="Spratt B.G."/>
            <person name="Parkhill J."/>
        </authorList>
    </citation>
    <scope>NUCLEOTIDE SEQUENCE [LARGE SCALE GENOMIC DNA]</scope>
    <source>
        <strain>MRSA252</strain>
    </source>
</reference>
<keyword id="KW-0131">Cell cycle</keyword>
<keyword id="KW-0132">Cell division</keyword>
<keyword id="KW-0238">DNA-binding</keyword>
<protein>
    <recommendedName>
        <fullName evidence="1">Probable cell division protein WhiA</fullName>
    </recommendedName>
</protein>
<comment type="function">
    <text evidence="1">Involved in cell division and chromosome segregation.</text>
</comment>
<comment type="similarity">
    <text evidence="1">Belongs to the WhiA family.</text>
</comment>
<proteinExistence type="inferred from homology"/>
<sequence length="314" mass="35868">MSFASEMKNELTRIDVDEMNAKAELSALIRMNGALSLSNQQFVINVQTENATTARRIYSLIKRVFNVEVEILVRKKMKLKKNNIYICRTKMKAKEILDELGILKDGIFTHEIDHSMIQDDEMRRSYLRGAFLAGGSVNNPETSSYHLEIFSQNESHAEGLTKLMNSYELNAKHLERKKGSITYLKEAEKISDFLSLIGGYQALLKFEDVRIVRDMRNSVNRLVNCETANLNKTVSAAMKQVESIKLIDKEIGIENLPDRLREIARIRVEHQEISLKELGEMVSTGPISKSGVNHRLRKLNDLADKIRNGEQIEL</sequence>
<gene>
    <name evidence="1" type="primary">whiA</name>
    <name type="ordered locus">SAR0822</name>
</gene>
<name>WHIA_STAAR</name>